<sequence length="201" mass="20652">MLKEVRPAVVSLLALTMITGLAYPLAVTGLATVLFPYQAQGSLVERGGKVVGSALIGQEFKGDEYFHGRPSATVAPDPADSSKTVSAPYNAANSGGSNLGPTSKALADRLSEDVAKLKAENPAAPIPVDLVTTSGSGLDPDISPEGALFQVPRVAKARGVTEEQIRKLVGASIEQPLGGVLGESRVNVLKLNLALDAAAPR</sequence>
<name>KDPC_RHOPT</name>
<organism>
    <name type="scientific">Rhodopseudomonas palustris (strain TIE-1)</name>
    <dbReference type="NCBI Taxonomy" id="395960"/>
    <lineage>
        <taxon>Bacteria</taxon>
        <taxon>Pseudomonadati</taxon>
        <taxon>Pseudomonadota</taxon>
        <taxon>Alphaproteobacteria</taxon>
        <taxon>Hyphomicrobiales</taxon>
        <taxon>Nitrobacteraceae</taxon>
        <taxon>Rhodopseudomonas</taxon>
    </lineage>
</organism>
<comment type="function">
    <text evidence="1">Part of the high-affinity ATP-driven potassium transport (or Kdp) system, which catalyzes the hydrolysis of ATP coupled with the electrogenic transport of potassium into the cytoplasm. This subunit acts as a catalytic chaperone that increases the ATP-binding affinity of the ATP-hydrolyzing subunit KdpB by the formation of a transient KdpB/KdpC/ATP ternary complex.</text>
</comment>
<comment type="subunit">
    <text evidence="1">The system is composed of three essential subunits: KdpA, KdpB and KdpC.</text>
</comment>
<comment type="subcellular location">
    <subcellularLocation>
        <location evidence="1">Cell inner membrane</location>
        <topology evidence="1">Single-pass membrane protein</topology>
    </subcellularLocation>
</comment>
<comment type="similarity">
    <text evidence="1">Belongs to the KdpC family.</text>
</comment>
<dbReference type="EMBL" id="CP001096">
    <property type="protein sequence ID" value="ACF01913.1"/>
    <property type="molecule type" value="Genomic_DNA"/>
</dbReference>
<dbReference type="RefSeq" id="WP_012496480.1">
    <property type="nucleotide sequence ID" value="NC_011004.1"/>
</dbReference>
<dbReference type="SMR" id="B3Q8S9"/>
<dbReference type="KEGG" id="rpt:Rpal_3411"/>
<dbReference type="HOGENOM" id="CLU_077094_2_0_5"/>
<dbReference type="OrthoDB" id="9788285at2"/>
<dbReference type="Proteomes" id="UP000001725">
    <property type="component" value="Chromosome"/>
</dbReference>
<dbReference type="GO" id="GO:0005886">
    <property type="term" value="C:plasma membrane"/>
    <property type="evidence" value="ECO:0007669"/>
    <property type="project" value="UniProtKB-SubCell"/>
</dbReference>
<dbReference type="GO" id="GO:0005524">
    <property type="term" value="F:ATP binding"/>
    <property type="evidence" value="ECO:0007669"/>
    <property type="project" value="UniProtKB-UniRule"/>
</dbReference>
<dbReference type="GO" id="GO:0008556">
    <property type="term" value="F:P-type potassium transmembrane transporter activity"/>
    <property type="evidence" value="ECO:0007669"/>
    <property type="project" value="InterPro"/>
</dbReference>
<dbReference type="HAMAP" id="MF_00276">
    <property type="entry name" value="KdpC"/>
    <property type="match status" value="1"/>
</dbReference>
<dbReference type="InterPro" id="IPR003820">
    <property type="entry name" value="KdpC"/>
</dbReference>
<dbReference type="NCBIfam" id="TIGR00681">
    <property type="entry name" value="kdpC"/>
    <property type="match status" value="1"/>
</dbReference>
<dbReference type="NCBIfam" id="NF001454">
    <property type="entry name" value="PRK00315.1"/>
    <property type="match status" value="1"/>
</dbReference>
<dbReference type="NCBIfam" id="NF010603">
    <property type="entry name" value="PRK13999.1"/>
    <property type="match status" value="1"/>
</dbReference>
<dbReference type="PANTHER" id="PTHR30042">
    <property type="entry name" value="POTASSIUM-TRANSPORTING ATPASE C CHAIN"/>
    <property type="match status" value="1"/>
</dbReference>
<dbReference type="PANTHER" id="PTHR30042:SF2">
    <property type="entry name" value="POTASSIUM-TRANSPORTING ATPASE KDPC SUBUNIT"/>
    <property type="match status" value="1"/>
</dbReference>
<dbReference type="Pfam" id="PF02669">
    <property type="entry name" value="KdpC"/>
    <property type="match status" value="1"/>
</dbReference>
<dbReference type="PIRSF" id="PIRSF001296">
    <property type="entry name" value="K_ATPase_KdpC"/>
    <property type="match status" value="1"/>
</dbReference>
<keyword id="KW-0067">ATP-binding</keyword>
<keyword id="KW-0997">Cell inner membrane</keyword>
<keyword id="KW-1003">Cell membrane</keyword>
<keyword id="KW-0406">Ion transport</keyword>
<keyword id="KW-0472">Membrane</keyword>
<keyword id="KW-0547">Nucleotide-binding</keyword>
<keyword id="KW-0630">Potassium</keyword>
<keyword id="KW-0633">Potassium transport</keyword>
<keyword id="KW-0812">Transmembrane</keyword>
<keyword id="KW-1133">Transmembrane helix</keyword>
<keyword id="KW-0813">Transport</keyword>
<evidence type="ECO:0000255" key="1">
    <source>
        <dbReference type="HAMAP-Rule" id="MF_00276"/>
    </source>
</evidence>
<evidence type="ECO:0000256" key="2">
    <source>
        <dbReference type="SAM" id="MobiDB-lite"/>
    </source>
</evidence>
<reference key="1">
    <citation type="submission" date="2008-05" db="EMBL/GenBank/DDBJ databases">
        <title>Complete sequence of Rhodopseudomonas palustris TIE-1.</title>
        <authorList>
            <consortium name="US DOE Joint Genome Institute"/>
            <person name="Lucas S."/>
            <person name="Copeland A."/>
            <person name="Lapidus A."/>
            <person name="Glavina del Rio T."/>
            <person name="Dalin E."/>
            <person name="Tice H."/>
            <person name="Pitluck S."/>
            <person name="Chain P."/>
            <person name="Malfatti S."/>
            <person name="Shin M."/>
            <person name="Vergez L."/>
            <person name="Lang D."/>
            <person name="Schmutz J."/>
            <person name="Larimer F."/>
            <person name="Land M."/>
            <person name="Hauser L."/>
            <person name="Kyrpides N."/>
            <person name="Mikhailova N."/>
            <person name="Emerson D."/>
            <person name="Newman D.K."/>
            <person name="Roden E."/>
            <person name="Richardson P."/>
        </authorList>
    </citation>
    <scope>NUCLEOTIDE SEQUENCE [LARGE SCALE GENOMIC DNA]</scope>
    <source>
        <strain>TIE-1</strain>
    </source>
</reference>
<proteinExistence type="inferred from homology"/>
<gene>
    <name evidence="1" type="primary">kdpC</name>
    <name type="ordered locus">Rpal_3411</name>
</gene>
<accession>B3Q8S9</accession>
<feature type="chain" id="PRO_1000114736" description="Potassium-transporting ATPase KdpC subunit">
    <location>
        <begin position="1"/>
        <end position="201"/>
    </location>
</feature>
<feature type="transmembrane region" description="Helical" evidence="1">
    <location>
        <begin position="12"/>
        <end position="34"/>
    </location>
</feature>
<feature type="region of interest" description="Disordered" evidence="2">
    <location>
        <begin position="69"/>
        <end position="102"/>
    </location>
</feature>
<feature type="compositionally biased region" description="Polar residues" evidence="2">
    <location>
        <begin position="81"/>
        <end position="101"/>
    </location>
</feature>
<protein>
    <recommendedName>
        <fullName evidence="1">Potassium-transporting ATPase KdpC subunit</fullName>
    </recommendedName>
    <alternativeName>
        <fullName evidence="1">ATP phosphohydrolase [potassium-transporting] C chain</fullName>
    </alternativeName>
    <alternativeName>
        <fullName evidence="1">Potassium-binding and translocating subunit C</fullName>
    </alternativeName>
    <alternativeName>
        <fullName evidence="1">Potassium-translocating ATPase C chain</fullName>
    </alternativeName>
</protein>